<feature type="chain" id="PRO_0000460726" description="Somaliensene A/B synthase">
    <location>
        <begin position="1"/>
        <end position="299"/>
    </location>
</feature>
<feature type="transmembrane region" description="Helical" evidence="2">
    <location>
        <begin position="32"/>
        <end position="49"/>
    </location>
</feature>
<feature type="transmembrane region" description="Helical" evidence="2">
    <location>
        <begin position="56"/>
        <end position="72"/>
    </location>
</feature>
<feature type="transmembrane region" description="Helical" evidence="2">
    <location>
        <begin position="110"/>
        <end position="132"/>
    </location>
</feature>
<feature type="transmembrane region" description="Helical" evidence="2">
    <location>
        <begin position="153"/>
        <end position="171"/>
    </location>
</feature>
<feature type="transmembrane region" description="Helical" evidence="2">
    <location>
        <begin position="177"/>
        <end position="194"/>
    </location>
</feature>
<feature type="transmembrane region" description="Helical" evidence="2">
    <location>
        <begin position="222"/>
        <end position="241"/>
    </location>
</feature>
<feature type="transmembrane region" description="Helical" evidence="2">
    <location>
        <begin position="247"/>
        <end position="269"/>
    </location>
</feature>
<dbReference type="EC" id="4.2.3.216" evidence="3"/>
<dbReference type="EC" id="4.2.3.217" evidence="3"/>
<dbReference type="EMBL" id="AJJM01000001">
    <property type="status" value="NOT_ANNOTATED_CDS"/>
    <property type="molecule type" value="Genomic_DNA"/>
</dbReference>
<dbReference type="RefSeq" id="WP_010468024.1">
    <property type="nucleotide sequence ID" value="NZ_AJJM01000001.1"/>
</dbReference>
<dbReference type="UniPathway" id="UPA00213"/>
<dbReference type="GO" id="GO:0005886">
    <property type="term" value="C:plasma membrane"/>
    <property type="evidence" value="ECO:0007669"/>
    <property type="project" value="UniProtKB-SubCell"/>
</dbReference>
<dbReference type="GO" id="GO:0016829">
    <property type="term" value="F:lyase activity"/>
    <property type="evidence" value="ECO:0007669"/>
    <property type="project" value="UniProtKB-KW"/>
</dbReference>
<dbReference type="GO" id="GO:0016765">
    <property type="term" value="F:transferase activity, transferring alkyl or aryl (other than methyl) groups"/>
    <property type="evidence" value="ECO:0007669"/>
    <property type="project" value="InterPro"/>
</dbReference>
<dbReference type="CDD" id="cd13965">
    <property type="entry name" value="PT_UbiA_3"/>
    <property type="match status" value="1"/>
</dbReference>
<dbReference type="Gene3D" id="1.10.357.140">
    <property type="entry name" value="UbiA prenyltransferase"/>
    <property type="match status" value="1"/>
</dbReference>
<dbReference type="InterPro" id="IPR050475">
    <property type="entry name" value="Prenyltransferase_related"/>
</dbReference>
<dbReference type="InterPro" id="IPR000537">
    <property type="entry name" value="UbiA_prenyltransferase"/>
</dbReference>
<dbReference type="InterPro" id="IPR044878">
    <property type="entry name" value="UbiA_sf"/>
</dbReference>
<dbReference type="PANTHER" id="PTHR42723">
    <property type="entry name" value="CHLOROPHYLL SYNTHASE"/>
    <property type="match status" value="1"/>
</dbReference>
<dbReference type="PANTHER" id="PTHR42723:SF1">
    <property type="entry name" value="CHLOROPHYLL SYNTHASE, CHLOROPLASTIC"/>
    <property type="match status" value="1"/>
</dbReference>
<dbReference type="Pfam" id="PF01040">
    <property type="entry name" value="UbiA"/>
    <property type="match status" value="1"/>
</dbReference>
<proteinExistence type="evidence at protein level"/>
<evidence type="ECO:0000250" key="1">
    <source>
        <dbReference type="UniProtKB" id="A0A1V0QSF1"/>
    </source>
</evidence>
<evidence type="ECO:0000255" key="2"/>
<evidence type="ECO:0000269" key="3">
    <source>
    </source>
</evidence>
<evidence type="ECO:0000303" key="4">
    <source>
    </source>
</evidence>
<evidence type="ECO:0000305" key="5"/>
<evidence type="ECO:0000312" key="6">
    <source>
        <dbReference type="EMBL" id="AJJM01000001"/>
    </source>
</evidence>
<gene>
    <name evidence="4" type="primary">stsC</name>
    <name evidence="6" type="ordered locus">O3Q_RS0100770</name>
</gene>
<sequence length="299" mass="33833">MTTMTTNTRRTVWRTVWREIHVSWLFIRSDRWTTLFPATCFVLAAAVHTRLPPAETAVAVASGVLYFWLFVYEHTLANQLVGLEEDRVNKPLRPLVSGRSSVRGARLRLIAVRVAFPLYGWFLGVLEWALLWQVLSLLQHEGGWGRHWLGRNLYAGIGVVAQLAAAWEIVAPVTPDAWRWIVTLTITVTLLMSVQDLRDITGDRAVGRSTMPLVFGERNTRVFLCAGFALGPLAIHHFLMAPAGPHWWIVATDVVLGGLSLLLAFRVVLRRGQRSDQHTYRLVEQWYTLALAASLYTLR</sequence>
<reference key="1">
    <citation type="journal article" date="2012" name="J. Bacteriol.">
        <title>Draft genome sequence of the human pathogen Streptomyces somaliensis, a significant cause of actinomycetoma.</title>
        <authorList>
            <person name="Kirby R."/>
            <person name="Sangal V."/>
            <person name="Tucker N.P."/>
            <person name="Zakrzewska-Czerwinska J."/>
            <person name="Wierzbicka K."/>
            <person name="Herron P.R."/>
            <person name="Chu C.J."/>
            <person name="Chandra G."/>
            <person name="Fahal A.H."/>
            <person name="Goodfellow M."/>
            <person name="Hoskisson P.A."/>
        </authorList>
    </citation>
    <scope>NUCLEOTIDE SEQUENCE [LARGE SCALE GENOMIC DNA]</scope>
    <source>
        <strain>ATCC 33201 / DSM 40738 / JCM 12659 / KCTC 9044 / NCTC 11332 / NRRL B-12077 / IP 733</strain>
    </source>
</reference>
<reference key="2">
    <citation type="journal article" date="2018" name="J. Nat. Prod.">
        <title>Identification and Characterization of a Membrane-Bound Sesterterpene Cyclase from Streptomyces somaliensis.</title>
        <authorList>
            <person name="Yang Y."/>
            <person name="Zhang Y."/>
            <person name="Zhang S."/>
            <person name="Chen Q."/>
            <person name="Ma K."/>
            <person name="Bao L."/>
            <person name="Tao Y."/>
            <person name="Yin W."/>
            <person name="Wang G."/>
            <person name="Liu H."/>
        </authorList>
    </citation>
    <scope>FUNCTION</scope>
    <scope>CATALYTIC ACTIVITY</scope>
    <scope>PATHWAY</scope>
    <scope>SUBCELLULAR LOCATION</scope>
    <source>
        <strain>ATCC 33201 / DSM 40738 / JCM 12659 / KCTC 9044 / NCTC 11332 / NRRL B-12077 / IP 733</strain>
    </source>
</reference>
<accession>P0DXD5</accession>
<comment type="function">
    <text evidence="3">Sesterterpene cyclase, which converts geranylfarnesyl diphosphate (GFPP) into the terpenes somaliensene A and somaliensene B.</text>
</comment>
<comment type="catalytic activity">
    <reaction evidence="3">
        <text>(2E,6E,10E,14E)-geranylfarnesyl diphosphate = somaliensene A + diphosphate</text>
        <dbReference type="Rhea" id="RHEA:78279"/>
        <dbReference type="ChEBI" id="CHEBI:33019"/>
        <dbReference type="ChEBI" id="CHEBI:57907"/>
        <dbReference type="ChEBI" id="CHEBI:209271"/>
        <dbReference type="EC" id="4.2.3.216"/>
    </reaction>
    <physiologicalReaction direction="left-to-right" evidence="3">
        <dbReference type="Rhea" id="RHEA:78280"/>
    </physiologicalReaction>
</comment>
<comment type="catalytic activity">
    <reaction evidence="3">
        <text>(2E,6E,10E,14E)-geranylfarnesyl diphosphate = (-)-somaliensene B + diphosphate</text>
        <dbReference type="Rhea" id="RHEA:78283"/>
        <dbReference type="ChEBI" id="CHEBI:33019"/>
        <dbReference type="ChEBI" id="CHEBI:57907"/>
        <dbReference type="ChEBI" id="CHEBI:209277"/>
        <dbReference type="EC" id="4.2.3.217"/>
    </reaction>
    <physiologicalReaction direction="left-to-right" evidence="3">
        <dbReference type="Rhea" id="RHEA:78284"/>
    </physiologicalReaction>
</comment>
<comment type="cofactor">
    <cofactor evidence="1">
        <name>Mg(2+)</name>
        <dbReference type="ChEBI" id="CHEBI:18420"/>
    </cofactor>
</comment>
<comment type="pathway">
    <text evidence="3">Secondary metabolite biosynthesis; terpenoid biosynthesis.</text>
</comment>
<comment type="subcellular location">
    <subcellularLocation>
        <location evidence="3">Cell membrane</location>
        <topology evidence="2">Multi-pass membrane protein</topology>
    </subcellularLocation>
</comment>
<comment type="similarity">
    <text evidence="5">Belongs to the UbiA prenyltransferase family.</text>
</comment>
<keyword id="KW-1003">Cell membrane</keyword>
<keyword id="KW-0456">Lyase</keyword>
<keyword id="KW-0460">Magnesium</keyword>
<keyword id="KW-0472">Membrane</keyword>
<keyword id="KW-0812">Transmembrane</keyword>
<keyword id="KW-1133">Transmembrane helix</keyword>
<name>STSC_STRE0</name>
<protein>
    <recommendedName>
        <fullName evidence="5">Somaliensene A/B synthase</fullName>
        <ecNumber evidence="3">4.2.3.216</ecNumber>
        <ecNumber evidence="3">4.2.3.217</ecNumber>
    </recommendedName>
    <alternativeName>
        <fullName evidence="4">Sesterterpene cyclase StsC</fullName>
    </alternativeName>
</protein>
<organism>
    <name type="scientific">Streptomyces somaliensis (strain ATCC 33201 / DSM 40738 / JCM 12659 / KCTC 9044 / NCTC 11332 / NRRL B-12077 / IP 733)</name>
    <dbReference type="NCBI Taxonomy" id="1134445"/>
    <lineage>
        <taxon>Bacteria</taxon>
        <taxon>Bacillati</taxon>
        <taxon>Actinomycetota</taxon>
        <taxon>Actinomycetes</taxon>
        <taxon>Kitasatosporales</taxon>
        <taxon>Streptomycetaceae</taxon>
        <taxon>Streptomyces</taxon>
    </lineage>
</organism>